<organism>
    <name type="scientific">Homo sapiens</name>
    <name type="common">Human</name>
    <dbReference type="NCBI Taxonomy" id="9606"/>
    <lineage>
        <taxon>Eukaryota</taxon>
        <taxon>Metazoa</taxon>
        <taxon>Chordata</taxon>
        <taxon>Craniata</taxon>
        <taxon>Vertebrata</taxon>
        <taxon>Euteleostomi</taxon>
        <taxon>Mammalia</taxon>
        <taxon>Eutheria</taxon>
        <taxon>Euarchontoglires</taxon>
        <taxon>Primates</taxon>
        <taxon>Haplorrhini</taxon>
        <taxon>Catarrhini</taxon>
        <taxon>Hominidae</taxon>
        <taxon>Homo</taxon>
    </lineage>
</organism>
<dbReference type="EMBL" id="AC139768">
    <property type="status" value="NOT_ANNOTATED_CDS"/>
    <property type="molecule type" value="Genomic_DNA"/>
</dbReference>
<dbReference type="EMBL" id="KF573645">
    <property type="status" value="NOT_ANNOTATED_CDS"/>
    <property type="molecule type" value="Genomic_DNA"/>
</dbReference>
<dbReference type="EMBL" id="CH471111">
    <property type="protein sequence ID" value="EAW58180.1"/>
    <property type="status" value="ALT_SEQ"/>
    <property type="molecule type" value="Genomic_DNA"/>
</dbReference>
<dbReference type="EMBL" id="BC051326">
    <property type="protein sequence ID" value="AAH51326.2"/>
    <property type="status" value="ALT_INIT"/>
    <property type="molecule type" value="mRNA"/>
</dbReference>
<dbReference type="EMBL" id="BC074765">
    <property type="protein sequence ID" value="AAH74765.3"/>
    <property type="status" value="ALT_INIT"/>
    <property type="molecule type" value="mRNA"/>
</dbReference>
<dbReference type="EMBL" id="L14482">
    <property type="status" value="NOT_ANNOTATED_CDS"/>
    <property type="molecule type" value="mRNA"/>
</dbReference>
<dbReference type="EMBL" id="Z21966">
    <property type="protein sequence ID" value="CAA79977.1"/>
    <property type="status" value="ALT_INIT"/>
    <property type="molecule type" value="mRNA"/>
</dbReference>
<dbReference type="EMBL" id="Z21967">
    <property type="protein sequence ID" value="CAA79978.1"/>
    <property type="molecule type" value="mRNA"/>
</dbReference>
<dbReference type="PIR" id="A54687">
    <property type="entry name" value="A54687"/>
</dbReference>
<dbReference type="RefSeq" id="NP_001317351.1">
    <property type="nucleotide sequence ID" value="NM_001330422.1"/>
</dbReference>
<dbReference type="RefSeq" id="NP_002693.3">
    <property type="nucleotide sequence ID" value="NM_002702.3"/>
</dbReference>
<dbReference type="RefSeq" id="XP_016875013.1">
    <property type="nucleotide sequence ID" value="XM_017019524.1"/>
</dbReference>
<dbReference type="RefSeq" id="XP_016875014.1">
    <property type="nucleotide sequence ID" value="XM_017019525.1"/>
</dbReference>
<dbReference type="RefSeq" id="XP_016875015.1">
    <property type="nucleotide sequence ID" value="XM_017019526.1"/>
</dbReference>
<dbReference type="RefSeq" id="XP_016875016.1">
    <property type="nucleotide sequence ID" value="XM_017019527.1"/>
</dbReference>
<dbReference type="RefSeq" id="XP_016875017.1">
    <property type="nucleotide sequence ID" value="XM_017019528.1"/>
</dbReference>
<dbReference type="RefSeq" id="XP_016875018.1">
    <property type="nucleotide sequence ID" value="XM_017019529.1"/>
</dbReference>
<dbReference type="RefSeq" id="XP_016875019.1">
    <property type="nucleotide sequence ID" value="XM_017019530.1"/>
</dbReference>
<dbReference type="RefSeq" id="XP_047284999.1">
    <property type="nucleotide sequence ID" value="XM_047429043.1"/>
</dbReference>
<dbReference type="RefSeq" id="XP_054228337.1">
    <property type="nucleotide sequence ID" value="XM_054372362.1"/>
</dbReference>
<dbReference type="PDB" id="3D1N">
    <property type="method" value="X-ray"/>
    <property type="resolution" value="2.51 A"/>
    <property type="chains" value="I/J/K/L/M/N/O/P=452-602"/>
</dbReference>
<dbReference type="PDBsum" id="3D1N"/>
<dbReference type="SMR" id="Q14863"/>
<dbReference type="BioGRID" id="111459">
    <property type="interactions" value="3"/>
</dbReference>
<dbReference type="FunCoup" id="Q14863">
    <property type="interactions" value="184"/>
</dbReference>
<dbReference type="IntAct" id="Q14863">
    <property type="interactions" value="3"/>
</dbReference>
<dbReference type="STRING" id="9606.ENSP00000330190"/>
<dbReference type="GlyGen" id="Q14863">
    <property type="glycosylation" value="4 sites, 1 O-linked glycan (1 site)"/>
</dbReference>
<dbReference type="iPTMnet" id="Q14863"/>
<dbReference type="PhosphoSitePlus" id="Q14863"/>
<dbReference type="BioMuta" id="POU6F1"/>
<dbReference type="DMDM" id="2495306"/>
<dbReference type="MassIVE" id="Q14863"/>
<dbReference type="PaxDb" id="9606-ENSP00000373895"/>
<dbReference type="PeptideAtlas" id="Q14863"/>
<dbReference type="Antibodypedia" id="14350">
    <property type="antibodies" value="245 antibodies from 27 providers"/>
</dbReference>
<dbReference type="DNASU" id="5463"/>
<dbReference type="GeneID" id="5463"/>
<dbReference type="KEGG" id="hsa:5463"/>
<dbReference type="MANE-Select" id="ENST00000333640.12">
    <property type="protein sequence ID" value="ENSP00000330190.11"/>
    <property type="RefSeq nucleotide sequence ID" value="NM_001330422.2"/>
    <property type="RefSeq protein sequence ID" value="NP_001317351.1"/>
</dbReference>
<dbReference type="UCSC" id="uc001rxy.4">
    <property type="organism name" value="human"/>
</dbReference>
<dbReference type="AGR" id="HGNC:9224"/>
<dbReference type="CTD" id="5463"/>
<dbReference type="DisGeNET" id="5463"/>
<dbReference type="GeneCards" id="POU6F1"/>
<dbReference type="HGNC" id="HGNC:9224">
    <property type="gene designation" value="POU6F1"/>
</dbReference>
<dbReference type="MIM" id="618043">
    <property type="type" value="gene"/>
</dbReference>
<dbReference type="neXtProt" id="NX_Q14863"/>
<dbReference type="PharmGKB" id="PA33548"/>
<dbReference type="VEuPathDB" id="HostDB:ENSG00000184271"/>
<dbReference type="eggNOG" id="KOG3802">
    <property type="taxonomic scope" value="Eukaryota"/>
</dbReference>
<dbReference type="GeneTree" id="ENSGT00940000160106"/>
<dbReference type="HOGENOM" id="CLU_013065_6_0_1"/>
<dbReference type="InParanoid" id="Q14863"/>
<dbReference type="OMA" id="SEMQPIQ"/>
<dbReference type="OrthoDB" id="10066259at2759"/>
<dbReference type="PAN-GO" id="Q14863">
    <property type="GO annotations" value="3 GO annotations based on evolutionary models"/>
</dbReference>
<dbReference type="PhylomeDB" id="Q14863"/>
<dbReference type="TreeFam" id="TF350705"/>
<dbReference type="PathwayCommons" id="Q14863"/>
<dbReference type="SignaLink" id="Q14863"/>
<dbReference type="SIGNOR" id="Q14863"/>
<dbReference type="BioGRID-ORCS" id="5463">
    <property type="hits" value="11 hits in 1171 CRISPR screens"/>
</dbReference>
<dbReference type="ChiTaRS" id="POU6F1">
    <property type="organism name" value="human"/>
</dbReference>
<dbReference type="GenomeRNAi" id="5463"/>
<dbReference type="Pharos" id="Q14863">
    <property type="development level" value="Tbio"/>
</dbReference>
<dbReference type="PRO" id="PR:Q14863"/>
<dbReference type="Proteomes" id="UP000005640">
    <property type="component" value="Chromosome 12"/>
</dbReference>
<dbReference type="RNAct" id="Q14863">
    <property type="molecule type" value="protein"/>
</dbReference>
<dbReference type="Bgee" id="ENSG00000184271">
    <property type="expression patterns" value="Expressed in right hemisphere of cerebellum and 190 other cell types or tissues"/>
</dbReference>
<dbReference type="ExpressionAtlas" id="A0A1C7CYV8">
    <property type="expression patterns" value="baseline and differential"/>
</dbReference>
<dbReference type="GO" id="GO:0000785">
    <property type="term" value="C:chromatin"/>
    <property type="evidence" value="ECO:0000247"/>
    <property type="project" value="NTNU_SB"/>
</dbReference>
<dbReference type="GO" id="GO:0005634">
    <property type="term" value="C:nucleus"/>
    <property type="evidence" value="ECO:0007669"/>
    <property type="project" value="UniProtKB-SubCell"/>
</dbReference>
<dbReference type="GO" id="GO:0003700">
    <property type="term" value="F:DNA-binding transcription factor activity"/>
    <property type="evidence" value="ECO:0000304"/>
    <property type="project" value="ProtInc"/>
</dbReference>
<dbReference type="GO" id="GO:0000981">
    <property type="term" value="F:DNA-binding transcription factor activity, RNA polymerase II-specific"/>
    <property type="evidence" value="ECO:0000247"/>
    <property type="project" value="NTNU_SB"/>
</dbReference>
<dbReference type="GO" id="GO:0001227">
    <property type="term" value="F:DNA-binding transcription repressor activity, RNA polymerase II-specific"/>
    <property type="evidence" value="ECO:0000314"/>
    <property type="project" value="NTNU_SB"/>
</dbReference>
<dbReference type="GO" id="GO:0000978">
    <property type="term" value="F:RNA polymerase II cis-regulatory region sequence-specific DNA binding"/>
    <property type="evidence" value="ECO:0000318"/>
    <property type="project" value="GO_Central"/>
</dbReference>
<dbReference type="GO" id="GO:0043565">
    <property type="term" value="F:sequence-specific DNA binding"/>
    <property type="evidence" value="ECO:0000314"/>
    <property type="project" value="NTNU_SB"/>
</dbReference>
<dbReference type="GO" id="GO:1990837">
    <property type="term" value="F:sequence-specific double-stranded DNA binding"/>
    <property type="evidence" value="ECO:0000314"/>
    <property type="project" value="ARUK-UCL"/>
</dbReference>
<dbReference type="GO" id="GO:0007420">
    <property type="term" value="P:brain development"/>
    <property type="evidence" value="ECO:0000304"/>
    <property type="project" value="ProtInc"/>
</dbReference>
<dbReference type="GO" id="GO:0007507">
    <property type="term" value="P:heart development"/>
    <property type="evidence" value="ECO:0000304"/>
    <property type="project" value="ProtInc"/>
</dbReference>
<dbReference type="GO" id="GO:0007517">
    <property type="term" value="P:muscle organ development"/>
    <property type="evidence" value="ECO:0000304"/>
    <property type="project" value="ProtInc"/>
</dbReference>
<dbReference type="GO" id="GO:0000122">
    <property type="term" value="P:negative regulation of transcription by RNA polymerase II"/>
    <property type="evidence" value="ECO:0000314"/>
    <property type="project" value="NTNU_SB"/>
</dbReference>
<dbReference type="GO" id="GO:0006357">
    <property type="term" value="P:regulation of transcription by RNA polymerase II"/>
    <property type="evidence" value="ECO:0000318"/>
    <property type="project" value="GO_Central"/>
</dbReference>
<dbReference type="CDD" id="cd00086">
    <property type="entry name" value="homeodomain"/>
    <property type="match status" value="1"/>
</dbReference>
<dbReference type="FunFam" id="1.10.10.60:FF:000051">
    <property type="entry name" value="POU domain protein"/>
    <property type="match status" value="1"/>
</dbReference>
<dbReference type="FunFam" id="1.10.260.40:FF:000013">
    <property type="entry name" value="POU domain protein"/>
    <property type="match status" value="1"/>
</dbReference>
<dbReference type="Gene3D" id="1.10.10.60">
    <property type="entry name" value="Homeodomain-like"/>
    <property type="match status" value="1"/>
</dbReference>
<dbReference type="Gene3D" id="1.10.260.40">
    <property type="entry name" value="lambda repressor-like DNA-binding domains"/>
    <property type="match status" value="1"/>
</dbReference>
<dbReference type="InterPro" id="IPR001356">
    <property type="entry name" value="HD"/>
</dbReference>
<dbReference type="InterPro" id="IPR009057">
    <property type="entry name" value="Homeodomain-like_sf"/>
</dbReference>
<dbReference type="InterPro" id="IPR010982">
    <property type="entry name" value="Lambda_DNA-bd_dom_sf"/>
</dbReference>
<dbReference type="InterPro" id="IPR013847">
    <property type="entry name" value="POU"/>
</dbReference>
<dbReference type="InterPro" id="IPR000327">
    <property type="entry name" value="POU_dom"/>
</dbReference>
<dbReference type="InterPro" id="IPR050255">
    <property type="entry name" value="POU_domain_TF"/>
</dbReference>
<dbReference type="PANTHER" id="PTHR11636">
    <property type="entry name" value="POU DOMAIN"/>
    <property type="match status" value="1"/>
</dbReference>
<dbReference type="PANTHER" id="PTHR11636:SF6">
    <property type="entry name" value="POU DOMAIN, CLASS 6, TRANSCRIPTION FACTOR 1"/>
    <property type="match status" value="1"/>
</dbReference>
<dbReference type="Pfam" id="PF00046">
    <property type="entry name" value="Homeodomain"/>
    <property type="match status" value="1"/>
</dbReference>
<dbReference type="Pfam" id="PF00157">
    <property type="entry name" value="Pou"/>
    <property type="match status" value="1"/>
</dbReference>
<dbReference type="PRINTS" id="PR00028">
    <property type="entry name" value="POUDOMAIN"/>
</dbReference>
<dbReference type="SMART" id="SM00389">
    <property type="entry name" value="HOX"/>
    <property type="match status" value="1"/>
</dbReference>
<dbReference type="SMART" id="SM00352">
    <property type="entry name" value="POU"/>
    <property type="match status" value="1"/>
</dbReference>
<dbReference type="SUPFAM" id="SSF46689">
    <property type="entry name" value="Homeodomain-like"/>
    <property type="match status" value="1"/>
</dbReference>
<dbReference type="SUPFAM" id="SSF47413">
    <property type="entry name" value="lambda repressor-like DNA-binding domains"/>
    <property type="match status" value="1"/>
</dbReference>
<dbReference type="PROSITE" id="PS50071">
    <property type="entry name" value="HOMEOBOX_2"/>
    <property type="match status" value="1"/>
</dbReference>
<dbReference type="PROSITE" id="PS00035">
    <property type="entry name" value="POU_1"/>
    <property type="match status" value="1"/>
</dbReference>
<dbReference type="PROSITE" id="PS00465">
    <property type="entry name" value="POU_2"/>
    <property type="match status" value="1"/>
</dbReference>
<dbReference type="PROSITE" id="PS51179">
    <property type="entry name" value="POU_3"/>
    <property type="match status" value="1"/>
</dbReference>
<proteinExistence type="evidence at protein level"/>
<keyword id="KW-0002">3D-structure</keyword>
<keyword id="KW-0238">DNA-binding</keyword>
<keyword id="KW-0371">Homeobox</keyword>
<keyword id="KW-0539">Nucleus</keyword>
<keyword id="KW-1267">Proteomics identification</keyword>
<keyword id="KW-1185">Reference proteome</keyword>
<keyword id="KW-0804">Transcription</keyword>
<keyword id="KW-0805">Transcription regulation</keyword>
<comment type="function">
    <text evidence="1">Transcription factor that binds preferentially to a variant of the octamer motif (5'-ATGATAAT-3').</text>
</comment>
<comment type="interaction">
    <interactant intactId="EBI-18138148">
        <id>Q14863</id>
    </interactant>
    <interactant intactId="EBI-12007918">
        <id>O00154-4</id>
        <label>ACOT7</label>
    </interactant>
    <organismsDiffer>false</organismsDiffer>
    <experiments>3</experiments>
</comment>
<comment type="interaction">
    <interactant intactId="EBI-18138148">
        <id>Q14863</id>
    </interactant>
    <interactant intactId="EBI-11956831">
        <id>Q13952-2</id>
        <label>NFYC</label>
    </interactant>
    <organismsDiffer>false</organismsDiffer>
    <experiments>3</experiments>
</comment>
<comment type="subcellular location">
    <subcellularLocation>
        <location evidence="2 3">Nucleus</location>
    </subcellularLocation>
</comment>
<comment type="tissue specificity">
    <text>In the embryo, expressed exclusively in the developing brain, whereas in the adult its expression is restricted to brain, heart, skeletal muscle and lung. In the brain, the highest expression levels are found in specific cell layers of the cortex, the olfactory bulb, the hippocampus and the cerebellum.</text>
</comment>
<comment type="similarity">
    <text evidence="5">Belongs to the POU transcription factor family. Class-6 subfamily.</text>
</comment>
<comment type="sequence caution" evidence="5">
    <conflict type="erroneous initiation">
        <sequence resource="EMBL-CDS" id="AAH51326"/>
    </conflict>
    <text>Truncated N-terminus.</text>
</comment>
<comment type="sequence caution" evidence="5">
    <conflict type="erroneous initiation">
        <sequence resource="EMBL-CDS" id="AAH74765"/>
    </conflict>
    <text>Truncated N-terminus.</text>
</comment>
<comment type="sequence caution" evidence="5">
    <conflict type="erroneous initiation">
        <sequence resource="EMBL-CDS" id="CAA79977"/>
    </conflict>
    <text>Truncated N-terminus.</text>
</comment>
<comment type="sequence caution" evidence="5">
    <conflict type="erroneous gene model prediction">
        <sequence resource="EMBL-CDS" id="EAW58180"/>
    </conflict>
</comment>
<accession>Q14863</accession>
<accession>A0A1C7CYV8</accession>
<accession>Q15944</accession>
<accession>Q6DK47</accession>
<accession>Q7Z7P6</accession>
<reference key="1">
    <citation type="journal article" date="2006" name="Nature">
        <title>The finished DNA sequence of human chromosome 12.</title>
        <authorList>
            <person name="Scherer S.E."/>
            <person name="Muzny D.M."/>
            <person name="Buhay C.J."/>
            <person name="Chen R."/>
            <person name="Cree A."/>
            <person name="Ding Y."/>
            <person name="Dugan-Rocha S."/>
            <person name="Gill R."/>
            <person name="Gunaratne P."/>
            <person name="Harris R.A."/>
            <person name="Hawes A.C."/>
            <person name="Hernandez J."/>
            <person name="Hodgson A.V."/>
            <person name="Hume J."/>
            <person name="Jackson A."/>
            <person name="Khan Z.M."/>
            <person name="Kovar-Smith C."/>
            <person name="Lewis L.R."/>
            <person name="Lozado R.J."/>
            <person name="Metzker M.L."/>
            <person name="Milosavljevic A."/>
            <person name="Miner G.R."/>
            <person name="Montgomery K.T."/>
            <person name="Morgan M.B."/>
            <person name="Nazareth L.V."/>
            <person name="Scott G."/>
            <person name="Sodergren E."/>
            <person name="Song X.-Z."/>
            <person name="Steffen D."/>
            <person name="Lovering R.C."/>
            <person name="Wheeler D.A."/>
            <person name="Worley K.C."/>
            <person name="Yuan Y."/>
            <person name="Zhang Z."/>
            <person name="Adams C.Q."/>
            <person name="Ansari-Lari M.A."/>
            <person name="Ayele M."/>
            <person name="Brown M.J."/>
            <person name="Chen G."/>
            <person name="Chen Z."/>
            <person name="Clerc-Blankenburg K.P."/>
            <person name="Davis C."/>
            <person name="Delgado O."/>
            <person name="Dinh H.H."/>
            <person name="Draper H."/>
            <person name="Gonzalez-Garay M.L."/>
            <person name="Havlak P."/>
            <person name="Jackson L.R."/>
            <person name="Jacob L.S."/>
            <person name="Kelly S.H."/>
            <person name="Li L."/>
            <person name="Li Z."/>
            <person name="Liu J."/>
            <person name="Liu W."/>
            <person name="Lu J."/>
            <person name="Maheshwari M."/>
            <person name="Nguyen B.-V."/>
            <person name="Okwuonu G.O."/>
            <person name="Pasternak S."/>
            <person name="Perez L.M."/>
            <person name="Plopper F.J.H."/>
            <person name="Santibanez J."/>
            <person name="Shen H."/>
            <person name="Tabor P.E."/>
            <person name="Verduzco D."/>
            <person name="Waldron L."/>
            <person name="Wang Q."/>
            <person name="Williams G.A."/>
            <person name="Zhang J."/>
            <person name="Zhou J."/>
            <person name="Allen C.C."/>
            <person name="Amin A.G."/>
            <person name="Anyalebechi V."/>
            <person name="Bailey M."/>
            <person name="Barbaria J.A."/>
            <person name="Bimage K.E."/>
            <person name="Bryant N.P."/>
            <person name="Burch P.E."/>
            <person name="Burkett C.E."/>
            <person name="Burrell K.L."/>
            <person name="Calderon E."/>
            <person name="Cardenas V."/>
            <person name="Carter K."/>
            <person name="Casias K."/>
            <person name="Cavazos I."/>
            <person name="Cavazos S.R."/>
            <person name="Ceasar H."/>
            <person name="Chacko J."/>
            <person name="Chan S.N."/>
            <person name="Chavez D."/>
            <person name="Christopoulos C."/>
            <person name="Chu J."/>
            <person name="Cockrell R."/>
            <person name="Cox C.D."/>
            <person name="Dang M."/>
            <person name="Dathorne S.R."/>
            <person name="David R."/>
            <person name="Davis C.M."/>
            <person name="Davy-Carroll L."/>
            <person name="Deshazo D.R."/>
            <person name="Donlin J.E."/>
            <person name="D'Souza L."/>
            <person name="Eaves K.A."/>
            <person name="Egan A."/>
            <person name="Emery-Cohen A.J."/>
            <person name="Escotto M."/>
            <person name="Flagg N."/>
            <person name="Forbes L.D."/>
            <person name="Gabisi A.M."/>
            <person name="Garza M."/>
            <person name="Hamilton C."/>
            <person name="Henderson N."/>
            <person name="Hernandez O."/>
            <person name="Hines S."/>
            <person name="Hogues M.E."/>
            <person name="Huang M."/>
            <person name="Idlebird D.G."/>
            <person name="Johnson R."/>
            <person name="Jolivet A."/>
            <person name="Jones S."/>
            <person name="Kagan R."/>
            <person name="King L.M."/>
            <person name="Leal B."/>
            <person name="Lebow H."/>
            <person name="Lee S."/>
            <person name="LeVan J.M."/>
            <person name="Lewis L.C."/>
            <person name="London P."/>
            <person name="Lorensuhewa L.M."/>
            <person name="Loulseged H."/>
            <person name="Lovett D.A."/>
            <person name="Lucier A."/>
            <person name="Lucier R.L."/>
            <person name="Ma J."/>
            <person name="Madu R.C."/>
            <person name="Mapua P."/>
            <person name="Martindale A.D."/>
            <person name="Martinez E."/>
            <person name="Massey E."/>
            <person name="Mawhiney S."/>
            <person name="Meador M.G."/>
            <person name="Mendez S."/>
            <person name="Mercado C."/>
            <person name="Mercado I.C."/>
            <person name="Merritt C.E."/>
            <person name="Miner Z.L."/>
            <person name="Minja E."/>
            <person name="Mitchell T."/>
            <person name="Mohabbat F."/>
            <person name="Mohabbat K."/>
            <person name="Montgomery B."/>
            <person name="Moore N."/>
            <person name="Morris S."/>
            <person name="Munidasa M."/>
            <person name="Ngo R.N."/>
            <person name="Nguyen N.B."/>
            <person name="Nickerson E."/>
            <person name="Nwaokelemeh O.O."/>
            <person name="Nwokenkwo S."/>
            <person name="Obregon M."/>
            <person name="Oguh M."/>
            <person name="Oragunye N."/>
            <person name="Oviedo R.J."/>
            <person name="Parish B.J."/>
            <person name="Parker D.N."/>
            <person name="Parrish J."/>
            <person name="Parks K.L."/>
            <person name="Paul H.A."/>
            <person name="Payton B.A."/>
            <person name="Perez A."/>
            <person name="Perrin W."/>
            <person name="Pickens A."/>
            <person name="Primus E.L."/>
            <person name="Pu L.-L."/>
            <person name="Puazo M."/>
            <person name="Quiles M.M."/>
            <person name="Quiroz J.B."/>
            <person name="Rabata D."/>
            <person name="Reeves K."/>
            <person name="Ruiz S.J."/>
            <person name="Shao H."/>
            <person name="Sisson I."/>
            <person name="Sonaike T."/>
            <person name="Sorelle R.P."/>
            <person name="Sutton A.E."/>
            <person name="Svatek A.F."/>
            <person name="Svetz L.A."/>
            <person name="Tamerisa K.S."/>
            <person name="Taylor T.R."/>
            <person name="Teague B."/>
            <person name="Thomas N."/>
            <person name="Thorn R.D."/>
            <person name="Trejos Z.Y."/>
            <person name="Trevino B.K."/>
            <person name="Ukegbu O.N."/>
            <person name="Urban J.B."/>
            <person name="Vasquez L.I."/>
            <person name="Vera V.A."/>
            <person name="Villasana D.M."/>
            <person name="Wang L."/>
            <person name="Ward-Moore S."/>
            <person name="Warren J.T."/>
            <person name="Wei X."/>
            <person name="White F."/>
            <person name="Williamson A.L."/>
            <person name="Wleczyk R."/>
            <person name="Wooden H.S."/>
            <person name="Wooden S.H."/>
            <person name="Yen J."/>
            <person name="Yoon L."/>
            <person name="Yoon V."/>
            <person name="Zorrilla S.E."/>
            <person name="Nelson D."/>
            <person name="Kucherlapati R."/>
            <person name="Weinstock G."/>
            <person name="Gibbs R.A."/>
        </authorList>
    </citation>
    <scope>NUCLEOTIDE SEQUENCE [LARGE SCALE GENOMIC DNA]</scope>
</reference>
<reference key="2">
    <citation type="submission" date="2005-07" db="EMBL/GenBank/DDBJ databases">
        <authorList>
            <person name="Mural R.J."/>
            <person name="Istrail S."/>
            <person name="Sutton G.G."/>
            <person name="Florea L."/>
            <person name="Halpern A.L."/>
            <person name="Mobarry C.M."/>
            <person name="Lippert R."/>
            <person name="Walenz B."/>
            <person name="Shatkay H."/>
            <person name="Dew I."/>
            <person name="Miller J.R."/>
            <person name="Flanigan M.J."/>
            <person name="Edwards N.J."/>
            <person name="Bolanos R."/>
            <person name="Fasulo D."/>
            <person name="Halldorsson B.V."/>
            <person name="Hannenhalli S."/>
            <person name="Turner R."/>
            <person name="Yooseph S."/>
            <person name="Lu F."/>
            <person name="Nusskern D.R."/>
            <person name="Shue B.C."/>
            <person name="Zheng X.H."/>
            <person name="Zhong F."/>
            <person name="Delcher A.L."/>
            <person name="Huson D.H."/>
            <person name="Kravitz S.A."/>
            <person name="Mouchard L."/>
            <person name="Reinert K."/>
            <person name="Remington K.A."/>
            <person name="Clark A.G."/>
            <person name="Waterman M.S."/>
            <person name="Eichler E.E."/>
            <person name="Adams M.D."/>
            <person name="Hunkapiller M.W."/>
            <person name="Myers E.W."/>
            <person name="Venter J.C."/>
        </authorList>
    </citation>
    <scope>NUCLEOTIDE SEQUENCE [LARGE SCALE GENOMIC DNA]</scope>
</reference>
<reference key="3">
    <citation type="journal article" date="2004" name="Genome Res.">
        <title>The status, quality, and expansion of the NIH full-length cDNA project: the Mammalian Gene Collection (MGC).</title>
        <authorList>
            <consortium name="The MGC Project Team"/>
        </authorList>
    </citation>
    <scope>NUCLEOTIDE SEQUENCE [LARGE SCALE MRNA] OF 216-611</scope>
    <source>
        <tissue>Brain</tissue>
        <tissue>Salivary gland</tissue>
    </source>
</reference>
<reference key="4">
    <citation type="journal article" date="1993" name="Mol. Cell. Biol.">
        <title>A novel POU domain protein which binds to the T-cell receptor beta enhancer.</title>
        <authorList>
            <person name="Messier H."/>
            <person name="Brickner H."/>
            <person name="Gaikwad J."/>
            <person name="Fotedar A."/>
        </authorList>
    </citation>
    <scope>NUCLEOTIDE SEQUENCE [MRNA] OF 266-611</scope>
</reference>
<reference key="5">
    <citation type="journal article" date="1994" name="Eur. J. Biochem.">
        <title>A human POU domain gene, mPOU, is expressed in developing brain and specific adult tissues.</title>
        <authorList>
            <person name="Wey E."/>
            <person name="Lyons G.E."/>
            <person name="Schaefer B.W."/>
        </authorList>
    </citation>
    <scope>NUCLEOTIDE SEQUENCE [MRNA] OF 283-611</scope>
    <source>
        <tissue>Skeletal muscle</tissue>
    </source>
</reference>
<evidence type="ECO:0000250" key="1"/>
<evidence type="ECO:0000255" key="2">
    <source>
        <dbReference type="PROSITE-ProRule" id="PRU00108"/>
    </source>
</evidence>
<evidence type="ECO:0000255" key="3">
    <source>
        <dbReference type="PROSITE-ProRule" id="PRU00530"/>
    </source>
</evidence>
<evidence type="ECO:0000256" key="4">
    <source>
        <dbReference type="SAM" id="MobiDB-lite"/>
    </source>
</evidence>
<evidence type="ECO:0000305" key="5"/>
<evidence type="ECO:0007829" key="6">
    <source>
        <dbReference type="PDB" id="3D1N"/>
    </source>
</evidence>
<sequence length="611" mass="63068">MDPGAGSETSLTVNEQVIVMSGHETIRVLEVGVDAQLPAEEESKGLEGVAAEGSQSGDPAEASQAAGEAGPDNLGSSAEATVKSPPGIPPSPATAIATFSQAPSQPQASQTLTPLAVQAAPQVLTQENLATVLTGVMVPAGAVTQPLLIPISIAGQVAGQQGLAVWTIPTATVAALPGLTAASPTGGVFKPPLAGLQAAAVLNTALPAPVQAAAPVQASSTAQPRPPAQPQTLFQTQPLLQTTPAILPQPTAATAAAPTPKPVDTPPQITVQPAGFAFSPGIISAASLGGQTQILGSLTTAPVITSAIPSMPGISSQILTNAQGQVIGTLPWVVNSASVAAPAPAQSLQVQAVTPQLLLNAQGQVIATLASSPLPPPVAVRKPSTPESPAKSEVQPIQPTPTVPQPAVVIASPAPAAKPSASAPIPITCSETPTVSQLVSKPHTPSLDEDGINLEEIREFAKNFKIRRLSLGLTQTQVGQALTATEGPAYSQSAICRFEKLDITPKSAQKLKPVLEKWLNEAELRNQEGQQNLMEFVGGEPSKKRKRRTSFTPQAIEALNAYFEKNPLPTGQEITEIAKELNYDREVVRVWFCNRRQTLKNTSKLNVFQIP</sequence>
<name>PO6F1_HUMAN</name>
<feature type="chain" id="PRO_0000100759" description="POU domain, class 6, transcription factor 1">
    <location>
        <begin position="1"/>
        <end position="611"/>
    </location>
</feature>
<feature type="domain" description="POU-specific" evidence="3">
    <location>
        <begin position="449"/>
        <end position="523"/>
    </location>
</feature>
<feature type="DNA-binding region" description="Homeobox" evidence="2">
    <location>
        <begin position="544"/>
        <end position="603"/>
    </location>
</feature>
<feature type="region of interest" description="Disordered" evidence="4">
    <location>
        <begin position="62"/>
        <end position="93"/>
    </location>
</feature>
<feature type="sequence conflict" description="In Ref. 5; CAA79978." evidence="5" ref="5">
    <original>N</original>
    <variation>M</variation>
    <location>
        <position position="520"/>
    </location>
</feature>
<feature type="helix" evidence="6">
    <location>
        <begin position="454"/>
        <end position="469"/>
    </location>
</feature>
<feature type="turn" evidence="6">
    <location>
        <begin position="470"/>
        <end position="472"/>
    </location>
</feature>
<feature type="helix" evidence="6">
    <location>
        <begin position="475"/>
        <end position="482"/>
    </location>
</feature>
<feature type="strand" evidence="6">
    <location>
        <begin position="485"/>
        <end position="487"/>
    </location>
</feature>
<feature type="helix" evidence="6">
    <location>
        <begin position="492"/>
        <end position="499"/>
    </location>
</feature>
<feature type="helix" evidence="6">
    <location>
        <begin position="505"/>
        <end position="528"/>
    </location>
</feature>
<feature type="helix" evidence="6">
    <location>
        <begin position="533"/>
        <end position="537"/>
    </location>
</feature>
<feature type="helix" evidence="6">
    <location>
        <begin position="553"/>
        <end position="565"/>
    </location>
</feature>
<feature type="helix" evidence="6">
    <location>
        <begin position="571"/>
        <end position="581"/>
    </location>
</feature>
<feature type="helix" evidence="6">
    <location>
        <begin position="585"/>
        <end position="599"/>
    </location>
</feature>
<protein>
    <recommendedName>
        <fullName>POU domain, class 6, transcription factor 1</fullName>
    </recommendedName>
    <alternativeName>
        <fullName>Brain-specific homeobox/POU domain protein 5</fullName>
        <shortName>Brain-5</shortName>
        <shortName>Brn-5</shortName>
    </alternativeName>
    <alternativeName>
        <fullName>mPOU homeobox protein</fullName>
    </alternativeName>
</protein>
<gene>
    <name type="primary">POU6F1</name>
    <name type="synonym">BRN5</name>
    <name type="synonym">MPOU</name>
    <name type="synonym">TCFB1</name>
</gene>